<organism>
    <name type="scientific">Methanocaldococcus jannaschii (strain ATCC 43067 / DSM 2661 / JAL-1 / JCM 10045 / NBRC 100440)</name>
    <name type="common">Methanococcus jannaschii</name>
    <dbReference type="NCBI Taxonomy" id="243232"/>
    <lineage>
        <taxon>Archaea</taxon>
        <taxon>Methanobacteriati</taxon>
        <taxon>Methanobacteriota</taxon>
        <taxon>Methanomada group</taxon>
        <taxon>Methanococci</taxon>
        <taxon>Methanococcales</taxon>
        <taxon>Methanocaldococcaceae</taxon>
        <taxon>Methanocaldococcus</taxon>
    </lineage>
</organism>
<name>SYY_METJA</name>
<sequence length="306" mass="35049">MDEFEMIKRNTSEIISEEELREVLKKDEKSAYIGFEPSGKIHLGHYLQIKKMIDLQNAGFDIIILLADLHAYLNQKGELDEIRKIGDYNKKVFEAMGLKAKYVYGSEFQLDKDYTLNVYRLALKTTLKRARRSMELIAREDENPKVAEVIYPIMQVNDIHYLGVDVAVGGMEQRKIHMLARELLPKKVVCIHNPVLTGLDGEGKMSSSKGNFIAVDDSPEEIRAKIKKAYCPAGVVEGNPIMEIAKYFLEYPLTIKRPEKFGGDLTVNSYEELESLFKNKELHPMDLKNAVAEELIKILEPIRKRL</sequence>
<reference key="1">
    <citation type="journal article" date="1996" name="Science">
        <title>Complete genome sequence of the methanogenic archaeon, Methanococcus jannaschii.</title>
        <authorList>
            <person name="Bult C.J."/>
            <person name="White O."/>
            <person name="Olsen G.J."/>
            <person name="Zhou L."/>
            <person name="Fleischmann R.D."/>
            <person name="Sutton G.G."/>
            <person name="Blake J.A."/>
            <person name="FitzGerald L.M."/>
            <person name="Clayton R.A."/>
            <person name="Gocayne J.D."/>
            <person name="Kerlavage A.R."/>
            <person name="Dougherty B.A."/>
            <person name="Tomb J.-F."/>
            <person name="Adams M.D."/>
            <person name="Reich C.I."/>
            <person name="Overbeek R."/>
            <person name="Kirkness E.F."/>
            <person name="Weinstock K.G."/>
            <person name="Merrick J.M."/>
            <person name="Glodek A."/>
            <person name="Scott J.L."/>
            <person name="Geoghagen N.S.M."/>
            <person name="Weidman J.F."/>
            <person name="Fuhrmann J.L."/>
            <person name="Nguyen D."/>
            <person name="Utterback T.R."/>
            <person name="Kelley J.M."/>
            <person name="Peterson J.D."/>
            <person name="Sadow P.W."/>
            <person name="Hanna M.C."/>
            <person name="Cotton M.D."/>
            <person name="Roberts K.M."/>
            <person name="Hurst M.A."/>
            <person name="Kaine B.P."/>
            <person name="Borodovsky M."/>
            <person name="Klenk H.-P."/>
            <person name="Fraser C.M."/>
            <person name="Smith H.O."/>
            <person name="Woese C.R."/>
            <person name="Venter J.C."/>
        </authorList>
    </citation>
    <scope>NUCLEOTIDE SEQUENCE [LARGE SCALE GENOMIC DNA]</scope>
    <source>
        <strain>ATCC 43067 / DSM 2661 / JAL-1 / JCM 10045 / NBRC 100440</strain>
    </source>
</reference>
<reference key="2">
    <citation type="journal article" date="1999" name="J. Biol. Chem.">
        <title>Major anticodon-binding region missing from an archaebacterial tRNA synthetase.</title>
        <authorList>
            <person name="Steer B.A."/>
            <person name="Schimmel P."/>
        </authorList>
    </citation>
    <scope>FUNCTION</scope>
    <scope>SUBUNIT</scope>
    <scope>KINETIC PARAMETERS</scope>
</reference>
<reference key="3">
    <citation type="journal article" date="1999" name="Proc. Natl. Acad. Sci. U.S.A.">
        <title>Domain-domain communication in a miniature archaebacterial tRNA synthetase.</title>
        <authorList>
            <person name="Steer B.A."/>
            <person name="Schimmel P."/>
        </authorList>
    </citation>
    <scope>MUTAGENESIS OF ASP-286 AND LYS-288</scope>
</reference>
<reference key="4">
    <citation type="journal article" date="2003" name="Nat. Struct. Biol.">
        <title>Structural basis for orthogonal tRNA specificities of tyrosyl-tRNA synthetases for genetic code expansion.</title>
        <authorList>
            <person name="Kobayashi T."/>
            <person name="Nureki O."/>
            <person name="Ishitani R."/>
            <person name="Yaremchuk A."/>
            <person name="Tukalo M."/>
            <person name="Cusack S."/>
            <person name="Sakamoto K."/>
            <person name="Yokoyama S."/>
        </authorList>
    </citation>
    <scope>X-RAY CRYSTALLOGRAPHY (1.95 ANGSTROMS) IN COMPLEX WITH TRNA(TYR) AND TYROSINE</scope>
    <scope>MUTAGENESIS OF ASP-286</scope>
    <scope>SUBUNIT</scope>
</reference>
<reference key="5">
    <citation type="journal article" date="2005" name="Protein Sci.">
        <title>Crystal structures of apo wild-type M. jannaschii tyrosyl-tRNA synthetase (TyrRS) and an engineered TyrRS specific for O-methyl-L-tyrosine.</title>
        <authorList>
            <person name="Zhang Y."/>
            <person name="Wang L."/>
            <person name="Schultz P.G."/>
            <person name="Wilson I.A."/>
        </authorList>
    </citation>
    <scope>X-RAY CRYSTALLOGRAPHY (2.66 ANGSTROMS) OF WILD-TYPE AND O-METHYL-TYROSINE-SPECIFIC MUTANT APOENZYME</scope>
</reference>
<evidence type="ECO:0000255" key="1"/>
<evidence type="ECO:0000269" key="2">
    <source>
    </source>
</evidence>
<evidence type="ECO:0000269" key="3">
    <source>
    </source>
</evidence>
<evidence type="ECO:0000269" key="4">
    <source>
    </source>
</evidence>
<evidence type="ECO:0000305" key="5"/>
<evidence type="ECO:0007829" key="6">
    <source>
        <dbReference type="PDB" id="1U7X"/>
    </source>
</evidence>
<evidence type="ECO:0007829" key="7">
    <source>
        <dbReference type="PDB" id="5N5U"/>
    </source>
</evidence>
<evidence type="ECO:0007829" key="8">
    <source>
        <dbReference type="PDB" id="6WRN"/>
    </source>
</evidence>
<evidence type="ECO:0007829" key="9">
    <source>
        <dbReference type="PDB" id="6WRT"/>
    </source>
</evidence>
<feature type="chain" id="PRO_0000055669" description="Tyrosine--tRNA ligase">
    <location>
        <begin position="1"/>
        <end position="306"/>
    </location>
</feature>
<feature type="region of interest" description="Tyrosine">
    <location>
        <begin position="151"/>
        <end position="158"/>
    </location>
</feature>
<feature type="region of interest" description="Interaction with t-RNA">
    <location>
        <begin position="228"/>
        <end position="231"/>
    </location>
</feature>
<feature type="region of interest" description="Interaction with t-RNA">
    <location>
        <begin position="283"/>
        <end position="288"/>
    </location>
</feature>
<feature type="short sequence motif" description="'HIGH' region">
    <location>
        <begin position="37"/>
        <end position="45"/>
    </location>
</feature>
<feature type="short sequence motif" description="'KMSKS' region">
    <location>
        <begin position="204"/>
        <end position="208"/>
    </location>
</feature>
<feature type="binding site" evidence="4">
    <location>
        <position position="32"/>
    </location>
    <ligand>
        <name>L-tyrosine</name>
        <dbReference type="ChEBI" id="CHEBI:58315"/>
    </ligand>
</feature>
<feature type="binding site" evidence="4">
    <location>
        <position position="36"/>
    </location>
    <ligand>
        <name>L-tyrosine</name>
        <dbReference type="ChEBI" id="CHEBI:58315"/>
    </ligand>
</feature>
<feature type="binding site" evidence="4">
    <location>
        <position position="173"/>
    </location>
    <ligand>
        <name>L-tyrosine</name>
        <dbReference type="ChEBI" id="CHEBI:58315"/>
    </ligand>
</feature>
<feature type="binding site" evidence="1">
    <location>
        <position position="207"/>
    </location>
    <ligand>
        <name>ATP</name>
        <dbReference type="ChEBI" id="CHEBI:30616"/>
    </ligand>
</feature>
<feature type="site" description="Interaction with t-RNA">
    <location>
        <position position="143"/>
    </location>
</feature>
<feature type="mutagenesis site" description="Confers specificity for the non-natural amino acid O-methyl-tyrosine; when associated with T-107; A-158 and P-162.">
    <original>Y</original>
    <variation>Q</variation>
    <location>
        <position position="32"/>
    </location>
</feature>
<feature type="mutagenesis site" description="Confers specificity for the non-natural amino acid O-methyl-tyrosine; when associated with Q-32; A-158 and P-162.">
    <original>E</original>
    <variation>T</variation>
    <location>
        <position position="107"/>
    </location>
</feature>
<feature type="mutagenesis site" description="Confers specificity for the non-natural amino acid O-methyl-tyrosine; when associated with Q-32; T-107 and P-162.">
    <original>D</original>
    <variation>A</variation>
    <location>
        <position position="158"/>
    </location>
</feature>
<feature type="mutagenesis site" description="Confers specificity for the non-natural amino acid O-methyl-tyrosine; when associated with Q-32; T-107 and A-158.">
    <original>L</original>
    <variation>P</variation>
    <location>
        <position position="162"/>
    </location>
</feature>
<feature type="mutagenesis site" description="Decreases the rate of aminoacylation more than 10-fold, without effect on tyrosyl adenylate synthesis." evidence="2 4">
    <original>D</original>
    <variation>A</variation>
    <location>
        <position position="286"/>
    </location>
</feature>
<feature type="mutagenesis site" description="Decreases the rate of aminoacylation with wild-type tRNA and increases aminoacylation with amber suppressor tRNA 8-fold. Decreases affinity for wild-type tRNA and increases affinity for amber suppressor tRNA." evidence="2 4">
    <original>D</original>
    <variation>R</variation>
    <location>
        <position position="286"/>
    </location>
</feature>
<feature type="mutagenesis site" description="Decreases the rate of aminoacylation more than 200-fold, without effect on tyrosyl adenylate synthesis." evidence="2">
    <original>K</original>
    <variation>A</variation>
    <location>
        <position position="288"/>
    </location>
</feature>
<feature type="helix" evidence="9">
    <location>
        <begin position="3"/>
        <end position="8"/>
    </location>
</feature>
<feature type="strand" evidence="9">
    <location>
        <begin position="12"/>
        <end position="15"/>
    </location>
</feature>
<feature type="helix" evidence="9">
    <location>
        <begin position="17"/>
        <end position="25"/>
    </location>
</feature>
<feature type="strand" evidence="8">
    <location>
        <begin position="26"/>
        <end position="28"/>
    </location>
</feature>
<feature type="strand" evidence="9">
    <location>
        <begin position="30"/>
        <end position="35"/>
    </location>
</feature>
<feature type="helix" evidence="9">
    <location>
        <begin position="43"/>
        <end position="57"/>
    </location>
</feature>
<feature type="strand" evidence="9">
    <location>
        <begin position="61"/>
        <end position="66"/>
    </location>
</feature>
<feature type="helix" evidence="9">
    <location>
        <begin position="68"/>
        <end position="73"/>
    </location>
</feature>
<feature type="helix" evidence="9">
    <location>
        <begin position="79"/>
        <end position="95"/>
    </location>
</feature>
<feature type="strand" evidence="9">
    <location>
        <begin position="101"/>
        <end position="104"/>
    </location>
</feature>
<feature type="helix" evidence="9">
    <location>
        <begin position="105"/>
        <end position="107"/>
    </location>
</feature>
<feature type="turn" evidence="9">
    <location>
        <begin position="108"/>
        <end position="110"/>
    </location>
</feature>
<feature type="helix" evidence="9">
    <location>
        <begin position="112"/>
        <end position="124"/>
    </location>
</feature>
<feature type="helix" evidence="9">
    <location>
        <begin position="127"/>
        <end position="133"/>
    </location>
</feature>
<feature type="turn" evidence="9">
    <location>
        <begin position="134"/>
        <end position="137"/>
    </location>
</feature>
<feature type="helix" evidence="9">
    <location>
        <begin position="146"/>
        <end position="162"/>
    </location>
</feature>
<feature type="strand" evidence="9">
    <location>
        <begin position="165"/>
        <end position="170"/>
    </location>
</feature>
<feature type="helix" evidence="9">
    <location>
        <begin position="171"/>
        <end position="173"/>
    </location>
</feature>
<feature type="helix" evidence="9">
    <location>
        <begin position="174"/>
        <end position="183"/>
    </location>
</feature>
<feature type="strand" evidence="7">
    <location>
        <begin position="184"/>
        <end position="186"/>
    </location>
</feature>
<feature type="strand" evidence="9">
    <location>
        <begin position="189"/>
        <end position="193"/>
    </location>
</feature>
<feature type="strand" evidence="9">
    <location>
        <begin position="201"/>
        <end position="204"/>
    </location>
</feature>
<feature type="turn" evidence="9">
    <location>
        <begin position="207"/>
        <end position="210"/>
    </location>
</feature>
<feature type="strand" evidence="6">
    <location>
        <begin position="214"/>
        <end position="216"/>
    </location>
</feature>
<feature type="helix" evidence="9">
    <location>
        <begin position="219"/>
        <end position="227"/>
    </location>
</feature>
<feature type="helix" evidence="9">
    <location>
        <begin position="240"/>
        <end position="248"/>
    </location>
</feature>
<feature type="strand" evidence="9">
    <location>
        <begin position="251"/>
        <end position="255"/>
    </location>
</feature>
<feature type="helix" evidence="9">
    <location>
        <begin position="259"/>
        <end position="261"/>
    </location>
</feature>
<feature type="strand" evidence="9">
    <location>
        <begin position="265"/>
        <end position="269"/>
    </location>
</feature>
<feature type="helix" evidence="9">
    <location>
        <begin position="270"/>
        <end position="278"/>
    </location>
</feature>
<feature type="helix" evidence="9">
    <location>
        <begin position="284"/>
        <end position="306"/>
    </location>
</feature>
<comment type="function">
    <text evidence="3">Catalyzes the attachment of tyrosine to tRNA(Tyr) in a two-step reaction: tyrosine is first activated by ATP to form Tyr-AMP and then transferred to the acceptor end of tRNA(Tyr).</text>
</comment>
<comment type="catalytic activity">
    <reaction>
        <text>tRNA(Tyr) + L-tyrosine + ATP = L-tyrosyl-tRNA(Tyr) + AMP + diphosphate + H(+)</text>
        <dbReference type="Rhea" id="RHEA:10220"/>
        <dbReference type="Rhea" id="RHEA-COMP:9706"/>
        <dbReference type="Rhea" id="RHEA-COMP:9707"/>
        <dbReference type="ChEBI" id="CHEBI:15378"/>
        <dbReference type="ChEBI" id="CHEBI:30616"/>
        <dbReference type="ChEBI" id="CHEBI:33019"/>
        <dbReference type="ChEBI" id="CHEBI:58315"/>
        <dbReference type="ChEBI" id="CHEBI:78442"/>
        <dbReference type="ChEBI" id="CHEBI:78536"/>
        <dbReference type="ChEBI" id="CHEBI:456215"/>
        <dbReference type="EC" id="6.1.1.1"/>
    </reaction>
</comment>
<comment type="biophysicochemical properties">
    <kinetics>
        <KM evidence="3">15 uM for tRNA(Tyr) (at 45 degrees Celsius)</KM>
    </kinetics>
</comment>
<comment type="subunit">
    <text evidence="3 4">Homodimer.</text>
</comment>
<comment type="subcellular location">
    <subcellularLocation>
        <location>Cytoplasm</location>
    </subcellularLocation>
</comment>
<comment type="similarity">
    <text evidence="5">Belongs to the class-I aminoacyl-tRNA synthetase family. TyrS type 3 subfamily.</text>
</comment>
<gene>
    <name type="primary">tyrS</name>
    <name type="ordered locus">MJ0389</name>
</gene>
<accession>Q57834</accession>
<keyword id="KW-0002">3D-structure</keyword>
<keyword id="KW-0030">Aminoacyl-tRNA synthetase</keyword>
<keyword id="KW-0067">ATP-binding</keyword>
<keyword id="KW-0963">Cytoplasm</keyword>
<keyword id="KW-0436">Ligase</keyword>
<keyword id="KW-0547">Nucleotide-binding</keyword>
<keyword id="KW-0648">Protein biosynthesis</keyword>
<keyword id="KW-1185">Reference proteome</keyword>
<protein>
    <recommendedName>
        <fullName>Tyrosine--tRNA ligase</fullName>
        <ecNumber>6.1.1.1</ecNumber>
    </recommendedName>
    <alternativeName>
        <fullName>Tyrosyl-tRNA synthetase</fullName>
        <shortName>TyrRS</shortName>
    </alternativeName>
</protein>
<dbReference type="EC" id="6.1.1.1"/>
<dbReference type="EMBL" id="L77117">
    <property type="protein sequence ID" value="AAB98375.1"/>
    <property type="molecule type" value="Genomic_DNA"/>
</dbReference>
<dbReference type="PIR" id="E64348">
    <property type="entry name" value="E64348"/>
</dbReference>
<dbReference type="RefSeq" id="WP_010869888.1">
    <property type="nucleotide sequence ID" value="NC_000909.1"/>
</dbReference>
<dbReference type="PDB" id="1J1U">
    <property type="method" value="X-ray"/>
    <property type="resolution" value="1.95 A"/>
    <property type="chains" value="A=1-306"/>
</dbReference>
<dbReference type="PDB" id="1U7D">
    <property type="method" value="X-ray"/>
    <property type="resolution" value="2.65 A"/>
    <property type="chains" value="A/B=1-306"/>
</dbReference>
<dbReference type="PDB" id="1U7X">
    <property type="method" value="X-ray"/>
    <property type="resolution" value="3.00 A"/>
    <property type="chains" value="A/B=1-306"/>
</dbReference>
<dbReference type="PDB" id="1ZH0">
    <property type="method" value="X-ray"/>
    <property type="resolution" value="1.90 A"/>
    <property type="chains" value="A=1-306"/>
</dbReference>
<dbReference type="PDB" id="1ZH6">
    <property type="method" value="X-ray"/>
    <property type="resolution" value="2.50 A"/>
    <property type="chains" value="A=1-306"/>
</dbReference>
<dbReference type="PDB" id="2AG6">
    <property type="method" value="X-ray"/>
    <property type="resolution" value="1.90 A"/>
    <property type="chains" value="A=1-306"/>
</dbReference>
<dbReference type="PDB" id="2HGZ">
    <property type="method" value="X-ray"/>
    <property type="resolution" value="2.50 A"/>
    <property type="chains" value="A=2-306"/>
</dbReference>
<dbReference type="PDB" id="2PXH">
    <property type="method" value="X-ray"/>
    <property type="resolution" value="1.97 A"/>
    <property type="chains" value="A=1-306"/>
</dbReference>
<dbReference type="PDB" id="2ZP1">
    <property type="method" value="X-ray"/>
    <property type="resolution" value="1.70 A"/>
    <property type="chains" value="A=1-306"/>
</dbReference>
<dbReference type="PDB" id="3D6U">
    <property type="method" value="X-ray"/>
    <property type="resolution" value="2.20 A"/>
    <property type="chains" value="A=1-306"/>
</dbReference>
<dbReference type="PDB" id="3D6V">
    <property type="method" value="X-ray"/>
    <property type="resolution" value="2.20 A"/>
    <property type="chains" value="A=1-306"/>
</dbReference>
<dbReference type="PDB" id="3N2Y">
    <property type="method" value="X-ray"/>
    <property type="resolution" value="2.49 A"/>
    <property type="chains" value="A/B=1-306"/>
</dbReference>
<dbReference type="PDB" id="3QE4">
    <property type="method" value="X-ray"/>
    <property type="resolution" value="2.30 A"/>
    <property type="chains" value="A/B=1-306"/>
</dbReference>
<dbReference type="PDB" id="4HJR">
    <property type="method" value="X-ray"/>
    <property type="resolution" value="2.50 A"/>
    <property type="chains" value="A/B=1-306"/>
</dbReference>
<dbReference type="PDB" id="4HJX">
    <property type="method" value="X-ray"/>
    <property type="resolution" value="2.91 A"/>
    <property type="chains" value="A/B=1-306"/>
</dbReference>
<dbReference type="PDB" id="4HK4">
    <property type="method" value="X-ray"/>
    <property type="resolution" value="2.30 A"/>
    <property type="chains" value="A=1-306"/>
</dbReference>
<dbReference type="PDB" id="4HPW">
    <property type="method" value="X-ray"/>
    <property type="resolution" value="2.00 A"/>
    <property type="chains" value="A=1-306"/>
</dbReference>
<dbReference type="PDB" id="4ND6">
    <property type="method" value="X-ray"/>
    <property type="resolution" value="2.00 A"/>
    <property type="chains" value="A=1-306"/>
</dbReference>
<dbReference type="PDB" id="4ND7">
    <property type="method" value="X-ray"/>
    <property type="resolution" value="2.00 A"/>
    <property type="chains" value="A=1-306"/>
</dbReference>
<dbReference type="PDB" id="4NDA">
    <property type="method" value="X-ray"/>
    <property type="resolution" value="1.70 A"/>
    <property type="chains" value="A=1-306"/>
</dbReference>
<dbReference type="PDB" id="4NX2">
    <property type="method" value="X-ray"/>
    <property type="resolution" value="2.00 A"/>
    <property type="chains" value="A=1-306"/>
</dbReference>
<dbReference type="PDB" id="4PBR">
    <property type="method" value="X-ray"/>
    <property type="resolution" value="1.90 A"/>
    <property type="chains" value="A=1-306"/>
</dbReference>
<dbReference type="PDB" id="4PBS">
    <property type="method" value="X-ray"/>
    <property type="resolution" value="2.01 A"/>
    <property type="chains" value="A=1-306"/>
</dbReference>
<dbReference type="PDB" id="4PBT">
    <property type="method" value="X-ray"/>
    <property type="resolution" value="1.90 A"/>
    <property type="chains" value="A=1-306"/>
</dbReference>
<dbReference type="PDB" id="5L7P">
    <property type="method" value="X-ray"/>
    <property type="resolution" value="1.90 A"/>
    <property type="chains" value="A/B=1-306"/>
</dbReference>
<dbReference type="PDB" id="5N5U">
    <property type="method" value="X-ray"/>
    <property type="resolution" value="1.60 A"/>
    <property type="chains" value="A=1-306"/>
</dbReference>
<dbReference type="PDB" id="5N5V">
    <property type="method" value="X-ray"/>
    <property type="resolution" value="2.30 A"/>
    <property type="chains" value="A/B/C/D/E/F/G/H=1-306"/>
</dbReference>
<dbReference type="PDB" id="5NSF">
    <property type="method" value="X-ray"/>
    <property type="resolution" value="2.43 A"/>
    <property type="chains" value="A/B/C/D=1-306"/>
</dbReference>
<dbReference type="PDB" id="5U36">
    <property type="method" value="X-ray"/>
    <property type="resolution" value="3.03 A"/>
    <property type="chains" value="A/B=1-306"/>
</dbReference>
<dbReference type="PDB" id="6WRK">
    <property type="method" value="X-ray"/>
    <property type="resolution" value="1.95 A"/>
    <property type="chains" value="A=1-306"/>
</dbReference>
<dbReference type="PDB" id="6WRN">
    <property type="method" value="X-ray"/>
    <property type="resolution" value="1.60 A"/>
    <property type="chains" value="A=1-306"/>
</dbReference>
<dbReference type="PDB" id="6WRQ">
    <property type="method" value="X-ray"/>
    <property type="resolution" value="1.85 A"/>
    <property type="chains" value="A=1-306"/>
</dbReference>
<dbReference type="PDB" id="6WRT">
    <property type="method" value="X-ray"/>
    <property type="resolution" value="1.55 A"/>
    <property type="chains" value="A=1-306"/>
</dbReference>
<dbReference type="PDB" id="7C5C">
    <property type="method" value="X-ray"/>
    <property type="resolution" value="1.72 A"/>
    <property type="chains" value="A=1-306"/>
</dbReference>
<dbReference type="PDB" id="7CKG">
    <property type="method" value="X-ray"/>
    <property type="resolution" value="2.05 A"/>
    <property type="chains" value="A/B=1-306"/>
</dbReference>
<dbReference type="PDB" id="7CKH">
    <property type="method" value="X-ray"/>
    <property type="resolution" value="1.79 A"/>
    <property type="chains" value="A/B=1-306"/>
</dbReference>
<dbReference type="PDB" id="7YNW">
    <property type="method" value="X-ray"/>
    <property type="resolution" value="2.79 A"/>
    <property type="chains" value="A/B=1-306"/>
</dbReference>
<dbReference type="PDBsum" id="1J1U"/>
<dbReference type="PDBsum" id="1U7D"/>
<dbReference type="PDBsum" id="1U7X"/>
<dbReference type="PDBsum" id="1ZH0"/>
<dbReference type="PDBsum" id="1ZH6"/>
<dbReference type="PDBsum" id="2AG6"/>
<dbReference type="PDBsum" id="2HGZ"/>
<dbReference type="PDBsum" id="2PXH"/>
<dbReference type="PDBsum" id="2ZP1"/>
<dbReference type="PDBsum" id="3D6U"/>
<dbReference type="PDBsum" id="3D6V"/>
<dbReference type="PDBsum" id="3N2Y"/>
<dbReference type="PDBsum" id="3QE4"/>
<dbReference type="PDBsum" id="4HJR"/>
<dbReference type="PDBsum" id="4HJX"/>
<dbReference type="PDBsum" id="4HK4"/>
<dbReference type="PDBsum" id="4HPW"/>
<dbReference type="PDBsum" id="4ND6"/>
<dbReference type="PDBsum" id="4ND7"/>
<dbReference type="PDBsum" id="4NDA"/>
<dbReference type="PDBsum" id="4NX2"/>
<dbReference type="PDBsum" id="4PBR"/>
<dbReference type="PDBsum" id="4PBS"/>
<dbReference type="PDBsum" id="4PBT"/>
<dbReference type="PDBsum" id="5L7P"/>
<dbReference type="PDBsum" id="5N5U"/>
<dbReference type="PDBsum" id="5N5V"/>
<dbReference type="PDBsum" id="5NSF"/>
<dbReference type="PDBsum" id="5U36"/>
<dbReference type="PDBsum" id="6WRK"/>
<dbReference type="PDBsum" id="6WRN"/>
<dbReference type="PDBsum" id="6WRQ"/>
<dbReference type="PDBsum" id="6WRT"/>
<dbReference type="PDBsum" id="7C5C"/>
<dbReference type="PDBsum" id="7CKG"/>
<dbReference type="PDBsum" id="7CKH"/>
<dbReference type="PDBsum" id="7YNW"/>
<dbReference type="SMR" id="Q57834"/>
<dbReference type="FunCoup" id="Q57834">
    <property type="interactions" value="242"/>
</dbReference>
<dbReference type="STRING" id="243232.MJ_0389"/>
<dbReference type="PaxDb" id="243232-MJ_0389"/>
<dbReference type="EnsemblBacteria" id="AAB98375">
    <property type="protein sequence ID" value="AAB98375"/>
    <property type="gene ID" value="MJ_0389"/>
</dbReference>
<dbReference type="GeneID" id="1451246"/>
<dbReference type="KEGG" id="mja:MJ_0389"/>
<dbReference type="eggNOG" id="arCOG01886">
    <property type="taxonomic scope" value="Archaea"/>
</dbReference>
<dbReference type="HOGENOM" id="CLU_035267_0_1_2"/>
<dbReference type="InParanoid" id="Q57834"/>
<dbReference type="OrthoDB" id="8389at2157"/>
<dbReference type="PhylomeDB" id="Q57834"/>
<dbReference type="BRENDA" id="6.1.1.1">
    <property type="organism ID" value="3260"/>
</dbReference>
<dbReference type="SABIO-RK" id="Q57834"/>
<dbReference type="EvolutionaryTrace" id="Q57834"/>
<dbReference type="Proteomes" id="UP000000805">
    <property type="component" value="Chromosome"/>
</dbReference>
<dbReference type="GO" id="GO:0005737">
    <property type="term" value="C:cytoplasm"/>
    <property type="evidence" value="ECO:0000318"/>
    <property type="project" value="GO_Central"/>
</dbReference>
<dbReference type="GO" id="GO:0005524">
    <property type="term" value="F:ATP binding"/>
    <property type="evidence" value="ECO:0007669"/>
    <property type="project" value="UniProtKB-UniRule"/>
</dbReference>
<dbReference type="GO" id="GO:0004831">
    <property type="term" value="F:tyrosine-tRNA ligase activity"/>
    <property type="evidence" value="ECO:0000318"/>
    <property type="project" value="GO_Central"/>
</dbReference>
<dbReference type="GO" id="GO:0006437">
    <property type="term" value="P:tyrosyl-tRNA aminoacylation"/>
    <property type="evidence" value="ECO:0000318"/>
    <property type="project" value="GO_Central"/>
</dbReference>
<dbReference type="CDD" id="cd00805">
    <property type="entry name" value="TyrRS_core"/>
    <property type="match status" value="1"/>
</dbReference>
<dbReference type="Gene3D" id="3.40.50.620">
    <property type="entry name" value="HUPs"/>
    <property type="match status" value="1"/>
</dbReference>
<dbReference type="Gene3D" id="1.10.240.10">
    <property type="entry name" value="Tyrosyl-Transfer RNA Synthetase"/>
    <property type="match status" value="1"/>
</dbReference>
<dbReference type="HAMAP" id="MF_02008">
    <property type="entry name" value="Tyr_tRNA_synth_type3"/>
    <property type="match status" value="1"/>
</dbReference>
<dbReference type="InterPro" id="IPR001412">
    <property type="entry name" value="aa-tRNA-synth_I_CS"/>
</dbReference>
<dbReference type="InterPro" id="IPR002305">
    <property type="entry name" value="aa-tRNA-synth_Ic"/>
</dbReference>
<dbReference type="InterPro" id="IPR014729">
    <property type="entry name" value="Rossmann-like_a/b/a_fold"/>
</dbReference>
<dbReference type="InterPro" id="IPR002307">
    <property type="entry name" value="Tyr-tRNA-ligase"/>
</dbReference>
<dbReference type="InterPro" id="IPR023684">
    <property type="entry name" value="Tyr-tRNA-ligase_3"/>
</dbReference>
<dbReference type="InterPro" id="IPR023617">
    <property type="entry name" value="Tyr-tRNA-ligase_arc/euk-type"/>
</dbReference>
<dbReference type="InterPro" id="IPR050489">
    <property type="entry name" value="Tyr-tRNA_synthase"/>
</dbReference>
<dbReference type="NCBIfam" id="NF006330">
    <property type="entry name" value="PRK08560.1"/>
    <property type="match status" value="1"/>
</dbReference>
<dbReference type="NCBIfam" id="TIGR00234">
    <property type="entry name" value="tyrS"/>
    <property type="match status" value="1"/>
</dbReference>
<dbReference type="PANTHER" id="PTHR46264:SF4">
    <property type="entry name" value="TYROSINE--TRNA LIGASE, CYTOPLASMIC"/>
    <property type="match status" value="1"/>
</dbReference>
<dbReference type="PANTHER" id="PTHR46264">
    <property type="entry name" value="TYROSINE-TRNA LIGASE"/>
    <property type="match status" value="1"/>
</dbReference>
<dbReference type="Pfam" id="PF00579">
    <property type="entry name" value="tRNA-synt_1b"/>
    <property type="match status" value="1"/>
</dbReference>
<dbReference type="PIRSF" id="PIRSF006588">
    <property type="entry name" value="TyrRS_arch_euk"/>
    <property type="match status" value="1"/>
</dbReference>
<dbReference type="PRINTS" id="PR01040">
    <property type="entry name" value="TRNASYNTHTYR"/>
</dbReference>
<dbReference type="SUPFAM" id="SSF52374">
    <property type="entry name" value="Nucleotidylyl transferase"/>
    <property type="match status" value="1"/>
</dbReference>
<dbReference type="PROSITE" id="PS00178">
    <property type="entry name" value="AA_TRNA_LIGASE_I"/>
    <property type="match status" value="1"/>
</dbReference>
<proteinExistence type="evidence at protein level"/>